<feature type="chain" id="PRO_0000132395" description="Small ribosomal subunit protein uS4">
    <location>
        <begin position="1"/>
        <end position="206"/>
    </location>
</feature>
<feature type="domain" description="S4 RNA-binding" evidence="1">
    <location>
        <begin position="96"/>
        <end position="157"/>
    </location>
</feature>
<name>RS4_IDILO</name>
<comment type="function">
    <text evidence="1">One of the primary rRNA binding proteins, it binds directly to 16S rRNA where it nucleates assembly of the body of the 30S subunit.</text>
</comment>
<comment type="function">
    <text evidence="1">With S5 and S12 plays an important role in translational accuracy.</text>
</comment>
<comment type="subunit">
    <text evidence="1">Part of the 30S ribosomal subunit. Contacts protein S5. The interaction surface between S4 and S5 is involved in control of translational fidelity.</text>
</comment>
<comment type="similarity">
    <text evidence="1">Belongs to the universal ribosomal protein uS4 family.</text>
</comment>
<organism>
    <name type="scientific">Idiomarina loihiensis (strain ATCC BAA-735 / DSM 15497 / L2-TR)</name>
    <dbReference type="NCBI Taxonomy" id="283942"/>
    <lineage>
        <taxon>Bacteria</taxon>
        <taxon>Pseudomonadati</taxon>
        <taxon>Pseudomonadota</taxon>
        <taxon>Gammaproteobacteria</taxon>
        <taxon>Alteromonadales</taxon>
        <taxon>Idiomarinaceae</taxon>
        <taxon>Idiomarina</taxon>
    </lineage>
</organism>
<evidence type="ECO:0000255" key="1">
    <source>
        <dbReference type="HAMAP-Rule" id="MF_01306"/>
    </source>
</evidence>
<evidence type="ECO:0000305" key="2"/>
<accession>Q5QXV7</accession>
<sequence length="206" mass="23537">MARYLGPKLKLSRREGTDLFLKSGVRAIDSKCKIETAPGQHGARRGRLSDYGVQLREKQKVRRMYGVLEKQFRNYYKEAARLKGNTGENLLQLLEQRLDNVVYRMGFASTRAEARQLVSHKAVVVNGQVVNIPSFKVRPEDVVSVREKAKKQARIGAALELAEQREKPVWIEVDNNKLEGAFKRLPERSDLSAEINEQLIVELYSK</sequence>
<dbReference type="EMBL" id="AE017340">
    <property type="protein sequence ID" value="AAV82724.1"/>
    <property type="molecule type" value="Genomic_DNA"/>
</dbReference>
<dbReference type="RefSeq" id="WP_011235124.1">
    <property type="nucleotide sequence ID" value="NC_006512.1"/>
</dbReference>
<dbReference type="SMR" id="Q5QXV7"/>
<dbReference type="STRING" id="283942.IL1892"/>
<dbReference type="GeneID" id="41337082"/>
<dbReference type="KEGG" id="ilo:IL1892"/>
<dbReference type="eggNOG" id="COG0522">
    <property type="taxonomic scope" value="Bacteria"/>
</dbReference>
<dbReference type="HOGENOM" id="CLU_092403_0_2_6"/>
<dbReference type="OrthoDB" id="9803672at2"/>
<dbReference type="Proteomes" id="UP000001171">
    <property type="component" value="Chromosome"/>
</dbReference>
<dbReference type="GO" id="GO:0015935">
    <property type="term" value="C:small ribosomal subunit"/>
    <property type="evidence" value="ECO:0007669"/>
    <property type="project" value="InterPro"/>
</dbReference>
<dbReference type="GO" id="GO:0019843">
    <property type="term" value="F:rRNA binding"/>
    <property type="evidence" value="ECO:0007669"/>
    <property type="project" value="UniProtKB-UniRule"/>
</dbReference>
<dbReference type="GO" id="GO:0003735">
    <property type="term" value="F:structural constituent of ribosome"/>
    <property type="evidence" value="ECO:0007669"/>
    <property type="project" value="InterPro"/>
</dbReference>
<dbReference type="GO" id="GO:0042274">
    <property type="term" value="P:ribosomal small subunit biogenesis"/>
    <property type="evidence" value="ECO:0007669"/>
    <property type="project" value="TreeGrafter"/>
</dbReference>
<dbReference type="GO" id="GO:0006412">
    <property type="term" value="P:translation"/>
    <property type="evidence" value="ECO:0007669"/>
    <property type="project" value="UniProtKB-UniRule"/>
</dbReference>
<dbReference type="CDD" id="cd00165">
    <property type="entry name" value="S4"/>
    <property type="match status" value="1"/>
</dbReference>
<dbReference type="FunFam" id="1.10.1050.10:FF:000001">
    <property type="entry name" value="30S ribosomal protein S4"/>
    <property type="match status" value="1"/>
</dbReference>
<dbReference type="FunFam" id="3.10.290.10:FF:000001">
    <property type="entry name" value="30S ribosomal protein S4"/>
    <property type="match status" value="1"/>
</dbReference>
<dbReference type="Gene3D" id="1.10.1050.10">
    <property type="entry name" value="Ribosomal Protein S4 Delta 41, Chain A, domain 1"/>
    <property type="match status" value="1"/>
</dbReference>
<dbReference type="Gene3D" id="3.10.290.10">
    <property type="entry name" value="RNA-binding S4 domain"/>
    <property type="match status" value="1"/>
</dbReference>
<dbReference type="HAMAP" id="MF_01306_B">
    <property type="entry name" value="Ribosomal_uS4_B"/>
    <property type="match status" value="1"/>
</dbReference>
<dbReference type="InterPro" id="IPR022801">
    <property type="entry name" value="Ribosomal_uS4"/>
</dbReference>
<dbReference type="InterPro" id="IPR005709">
    <property type="entry name" value="Ribosomal_uS4_bac-type"/>
</dbReference>
<dbReference type="InterPro" id="IPR018079">
    <property type="entry name" value="Ribosomal_uS4_CS"/>
</dbReference>
<dbReference type="InterPro" id="IPR001912">
    <property type="entry name" value="Ribosomal_uS4_N"/>
</dbReference>
<dbReference type="InterPro" id="IPR002942">
    <property type="entry name" value="S4_RNA-bd"/>
</dbReference>
<dbReference type="InterPro" id="IPR036986">
    <property type="entry name" value="S4_RNA-bd_sf"/>
</dbReference>
<dbReference type="NCBIfam" id="NF003717">
    <property type="entry name" value="PRK05327.1"/>
    <property type="match status" value="1"/>
</dbReference>
<dbReference type="NCBIfam" id="TIGR01017">
    <property type="entry name" value="rpsD_bact"/>
    <property type="match status" value="1"/>
</dbReference>
<dbReference type="PANTHER" id="PTHR11831">
    <property type="entry name" value="30S 40S RIBOSOMAL PROTEIN"/>
    <property type="match status" value="1"/>
</dbReference>
<dbReference type="PANTHER" id="PTHR11831:SF4">
    <property type="entry name" value="SMALL RIBOSOMAL SUBUNIT PROTEIN US4M"/>
    <property type="match status" value="1"/>
</dbReference>
<dbReference type="Pfam" id="PF00163">
    <property type="entry name" value="Ribosomal_S4"/>
    <property type="match status" value="1"/>
</dbReference>
<dbReference type="Pfam" id="PF01479">
    <property type="entry name" value="S4"/>
    <property type="match status" value="1"/>
</dbReference>
<dbReference type="SMART" id="SM01390">
    <property type="entry name" value="Ribosomal_S4"/>
    <property type="match status" value="1"/>
</dbReference>
<dbReference type="SMART" id="SM00363">
    <property type="entry name" value="S4"/>
    <property type="match status" value="1"/>
</dbReference>
<dbReference type="SUPFAM" id="SSF55174">
    <property type="entry name" value="Alpha-L RNA-binding motif"/>
    <property type="match status" value="1"/>
</dbReference>
<dbReference type="PROSITE" id="PS00632">
    <property type="entry name" value="RIBOSOMAL_S4"/>
    <property type="match status" value="1"/>
</dbReference>
<dbReference type="PROSITE" id="PS50889">
    <property type="entry name" value="S4"/>
    <property type="match status" value="1"/>
</dbReference>
<keyword id="KW-1185">Reference proteome</keyword>
<keyword id="KW-0687">Ribonucleoprotein</keyword>
<keyword id="KW-0689">Ribosomal protein</keyword>
<keyword id="KW-0694">RNA-binding</keyword>
<keyword id="KW-0699">rRNA-binding</keyword>
<reference key="1">
    <citation type="journal article" date="2004" name="Proc. Natl. Acad. Sci. U.S.A.">
        <title>Genome sequence of the deep-sea gamma-proteobacterium Idiomarina loihiensis reveals amino acid fermentation as a source of carbon and energy.</title>
        <authorList>
            <person name="Hou S."/>
            <person name="Saw J.H."/>
            <person name="Lee K.S."/>
            <person name="Freitas T.A."/>
            <person name="Belisle C."/>
            <person name="Kawarabayasi Y."/>
            <person name="Donachie S.P."/>
            <person name="Pikina A."/>
            <person name="Galperin M.Y."/>
            <person name="Koonin E.V."/>
            <person name="Makarova K.S."/>
            <person name="Omelchenko M.V."/>
            <person name="Sorokin A."/>
            <person name="Wolf Y.I."/>
            <person name="Li Q.X."/>
            <person name="Keum Y.S."/>
            <person name="Campbell S."/>
            <person name="Denery J."/>
            <person name="Aizawa S."/>
            <person name="Shibata S."/>
            <person name="Malahoff A."/>
            <person name="Alam M."/>
        </authorList>
    </citation>
    <scope>NUCLEOTIDE SEQUENCE [LARGE SCALE GENOMIC DNA]</scope>
    <source>
        <strain>ATCC BAA-735 / DSM 15497 / L2-TR</strain>
    </source>
</reference>
<proteinExistence type="inferred from homology"/>
<protein>
    <recommendedName>
        <fullName evidence="1">Small ribosomal subunit protein uS4</fullName>
    </recommendedName>
    <alternativeName>
        <fullName evidence="2">30S ribosomal protein S4</fullName>
    </alternativeName>
</protein>
<gene>
    <name evidence="1" type="primary">rpsD</name>
    <name type="ordered locus">IL1892</name>
</gene>